<proteinExistence type="inferred from homology"/>
<gene>
    <name evidence="1" type="primary">apaG</name>
    <name type="ordered locus">XC_3441</name>
</gene>
<reference key="1">
    <citation type="journal article" date="2005" name="Genome Res.">
        <title>Comparative and functional genomic analyses of the pathogenicity of phytopathogen Xanthomonas campestris pv. campestris.</title>
        <authorList>
            <person name="Qian W."/>
            <person name="Jia Y."/>
            <person name="Ren S.-X."/>
            <person name="He Y.-Q."/>
            <person name="Feng J.-X."/>
            <person name="Lu L.-F."/>
            <person name="Sun Q."/>
            <person name="Ying G."/>
            <person name="Tang D.-J."/>
            <person name="Tang H."/>
            <person name="Wu W."/>
            <person name="Hao P."/>
            <person name="Wang L."/>
            <person name="Jiang B.-L."/>
            <person name="Zeng S."/>
            <person name="Gu W.-Y."/>
            <person name="Lu G."/>
            <person name="Rong L."/>
            <person name="Tian Y."/>
            <person name="Yao Z."/>
            <person name="Fu G."/>
            <person name="Chen B."/>
            <person name="Fang R."/>
            <person name="Qiang B."/>
            <person name="Chen Z."/>
            <person name="Zhao G.-P."/>
            <person name="Tang J.-L."/>
            <person name="He C."/>
        </authorList>
    </citation>
    <scope>NUCLEOTIDE SEQUENCE [LARGE SCALE GENOMIC DNA]</scope>
    <source>
        <strain>8004</strain>
    </source>
</reference>
<feature type="chain" id="PRO_1000083669" description="Protein ApaG">
    <location>
        <begin position="1"/>
        <end position="127"/>
    </location>
</feature>
<feature type="domain" description="ApaG" evidence="1">
    <location>
        <begin position="3"/>
        <end position="127"/>
    </location>
</feature>
<organism>
    <name type="scientific">Xanthomonas campestris pv. campestris (strain 8004)</name>
    <dbReference type="NCBI Taxonomy" id="314565"/>
    <lineage>
        <taxon>Bacteria</taxon>
        <taxon>Pseudomonadati</taxon>
        <taxon>Pseudomonadota</taxon>
        <taxon>Gammaproteobacteria</taxon>
        <taxon>Lysobacterales</taxon>
        <taxon>Lysobacteraceae</taxon>
        <taxon>Xanthomonas</taxon>
    </lineage>
</organism>
<protein>
    <recommendedName>
        <fullName evidence="1">Protein ApaG</fullName>
    </recommendedName>
</protein>
<name>APAG_XANC8</name>
<evidence type="ECO:0000255" key="1">
    <source>
        <dbReference type="HAMAP-Rule" id="MF_00791"/>
    </source>
</evidence>
<accession>Q4UR38</accession>
<sequence length="127" mass="14208">MQDDPRYRVEVEVSPRFLAHQSTPEEGRYAFAYSIRIQNAGAVPARLIARHWKITDANGRTEQVDGEGVVGEQPRLRPGEAFHYTSGVLLETEQGQMQGYYDMVADDGTEFTAPIAAFVLSVPRTLH</sequence>
<dbReference type="EMBL" id="CP000050">
    <property type="protein sequence ID" value="AAY50485.1"/>
    <property type="molecule type" value="Genomic_DNA"/>
</dbReference>
<dbReference type="RefSeq" id="WP_011036026.1">
    <property type="nucleotide sequence ID" value="NZ_CP155948.1"/>
</dbReference>
<dbReference type="SMR" id="Q4UR38"/>
<dbReference type="GeneID" id="58014635"/>
<dbReference type="KEGG" id="xcb:XC_3441"/>
<dbReference type="HOGENOM" id="CLU_128074_1_0_6"/>
<dbReference type="Proteomes" id="UP000000420">
    <property type="component" value="Chromosome"/>
</dbReference>
<dbReference type="GO" id="GO:0070987">
    <property type="term" value="P:error-free translesion synthesis"/>
    <property type="evidence" value="ECO:0007669"/>
    <property type="project" value="TreeGrafter"/>
</dbReference>
<dbReference type="Gene3D" id="2.60.40.1470">
    <property type="entry name" value="ApaG domain"/>
    <property type="match status" value="1"/>
</dbReference>
<dbReference type="HAMAP" id="MF_00791">
    <property type="entry name" value="ApaG"/>
    <property type="match status" value="1"/>
</dbReference>
<dbReference type="InterPro" id="IPR007474">
    <property type="entry name" value="ApaG_domain"/>
</dbReference>
<dbReference type="InterPro" id="IPR036767">
    <property type="entry name" value="ApaG_sf"/>
</dbReference>
<dbReference type="InterPro" id="IPR023065">
    <property type="entry name" value="Uncharacterised_ApaG"/>
</dbReference>
<dbReference type="NCBIfam" id="NF003967">
    <property type="entry name" value="PRK05461.1"/>
    <property type="match status" value="1"/>
</dbReference>
<dbReference type="PANTHER" id="PTHR14289">
    <property type="entry name" value="F-BOX ONLY PROTEIN 3"/>
    <property type="match status" value="1"/>
</dbReference>
<dbReference type="PANTHER" id="PTHR14289:SF16">
    <property type="entry name" value="POLYMERASE DELTA-INTERACTING PROTEIN 2"/>
    <property type="match status" value="1"/>
</dbReference>
<dbReference type="Pfam" id="PF04379">
    <property type="entry name" value="DUF525"/>
    <property type="match status" value="1"/>
</dbReference>
<dbReference type="SUPFAM" id="SSF110069">
    <property type="entry name" value="ApaG-like"/>
    <property type="match status" value="1"/>
</dbReference>
<dbReference type="PROSITE" id="PS51087">
    <property type="entry name" value="APAG"/>
    <property type="match status" value="1"/>
</dbReference>